<name>NSP2_ROTA1</name>
<organismHost>
    <name type="scientific">Aves</name>
    <dbReference type="NCBI Taxonomy" id="8782"/>
</organismHost>
<evidence type="ECO:0000255" key="1">
    <source>
        <dbReference type="HAMAP-Rule" id="MF_04089"/>
    </source>
</evidence>
<dbReference type="EC" id="3.6.4.-" evidence="1"/>
<dbReference type="EMBL" id="L04533">
    <property type="protein sequence ID" value="AAA47300.1"/>
    <property type="molecule type" value="Genomic_RNA"/>
</dbReference>
<dbReference type="SMR" id="Q03244"/>
<dbReference type="GO" id="GO:0030430">
    <property type="term" value="C:host cell cytoplasm"/>
    <property type="evidence" value="ECO:0007669"/>
    <property type="project" value="UniProtKB-SubCell"/>
</dbReference>
<dbReference type="GO" id="GO:0005524">
    <property type="term" value="F:ATP binding"/>
    <property type="evidence" value="ECO:0007669"/>
    <property type="project" value="UniProtKB-KW"/>
</dbReference>
<dbReference type="GO" id="GO:0046872">
    <property type="term" value="F:metal ion binding"/>
    <property type="evidence" value="ECO:0007669"/>
    <property type="project" value="UniProtKB-UniRule"/>
</dbReference>
<dbReference type="GO" id="GO:0004550">
    <property type="term" value="F:nucleoside diphosphate kinase activity"/>
    <property type="evidence" value="ECO:0007669"/>
    <property type="project" value="InterPro"/>
</dbReference>
<dbReference type="GO" id="GO:0017111">
    <property type="term" value="F:ribonucleoside triphosphate phosphatase activity"/>
    <property type="evidence" value="ECO:0007669"/>
    <property type="project" value="InterPro"/>
</dbReference>
<dbReference type="GO" id="GO:0003723">
    <property type="term" value="F:RNA binding"/>
    <property type="evidence" value="ECO:0007669"/>
    <property type="project" value="UniProtKB-UniRule"/>
</dbReference>
<dbReference type="GO" id="GO:0019079">
    <property type="term" value="P:viral genome replication"/>
    <property type="evidence" value="ECO:0007669"/>
    <property type="project" value="UniProtKB-UniRule"/>
</dbReference>
<dbReference type="Gene3D" id="3.30.428.20">
    <property type="entry name" value="Rotavirus NSP2 fragment, C-terminal domain"/>
    <property type="match status" value="1"/>
</dbReference>
<dbReference type="Gene3D" id="3.90.1400.10">
    <property type="entry name" value="Rotavirus NSP2 fragment, N-terminal domain"/>
    <property type="match status" value="1"/>
</dbReference>
<dbReference type="HAMAP" id="MF_04089">
    <property type="entry name" value="ROTA_NSP2"/>
    <property type="match status" value="1"/>
</dbReference>
<dbReference type="InterPro" id="IPR048306">
    <property type="entry name" value="Rota_NS35_C"/>
</dbReference>
<dbReference type="InterPro" id="IPR048573">
    <property type="entry name" value="Rota_NS35_N"/>
</dbReference>
<dbReference type="InterPro" id="IPR003668">
    <property type="entry name" value="Rotavirus_NSP2"/>
</dbReference>
<dbReference type="InterPro" id="IPR024076">
    <property type="entry name" value="Rotavirus_NSP2_C"/>
</dbReference>
<dbReference type="InterPro" id="IPR024068">
    <property type="entry name" value="Rotavirus_NSP2_N"/>
</dbReference>
<dbReference type="Pfam" id="PF02509">
    <property type="entry name" value="Rota_NS35_C"/>
    <property type="match status" value="1"/>
</dbReference>
<dbReference type="Pfam" id="PF21067">
    <property type="entry name" value="Rota_NS35_N"/>
    <property type="match status" value="1"/>
</dbReference>
<dbReference type="SUPFAM" id="SSF75347">
    <property type="entry name" value="Rotavirus NSP2 fragment, C-terminal domain"/>
    <property type="match status" value="1"/>
</dbReference>
<dbReference type="SUPFAM" id="SSF75574">
    <property type="entry name" value="Rotavirus NSP2 fragment, N-terminal domain"/>
    <property type="match status" value="1"/>
</dbReference>
<reference key="1">
    <citation type="journal article" date="1993" name="Virology">
        <title>Nucleotide and amino acid sequence analysis of the rotavirus nonstructural RNA-binding protein NS35.</title>
        <authorList>
            <person name="Patton J.T."/>
            <person name="Salter-Cid L."/>
            <person name="Kalbach A.N."/>
            <person name="Mansell E.A."/>
            <person name="Kattoura M.D."/>
        </authorList>
    </citation>
    <scope>NUCLEOTIDE SEQUENCE [GENOMIC RNA]</scope>
</reference>
<comment type="function">
    <text evidence="1">Participates in replication and packaging of the viral genome. Plays a crucial role, together with NSP5, in the formation of virus factories (viroplasms), which are large inclusions in the host cytoplasm where replication intermediates are assembled and viral RNA replication takes place. Displays ssRNA binding, NTPase, RNA triphosphatase (RTPase) and ATP-independent helix-unwinding activities. The unwinding activity may prepare and organize plus-strand RNAs for packaging and replication by removing interfering secondary structures. The RTPase activity plays a role in the removal of the gamma-phosphate from the rotavirus RNA minus strands of dsRNA genome segments. Participates in the selective exclusion of host proteins from stress granules (SG) and P bodies (PB). Also participates in the sequestration of these remodeled organelles in viral factories.</text>
</comment>
<comment type="cofactor">
    <cofactor evidence="1">
        <name>Mg(2+)</name>
        <dbReference type="ChEBI" id="CHEBI:18420"/>
    </cofactor>
</comment>
<comment type="subunit">
    <text evidence="1">Homooctamer. Interacts with VP1; this interaction is weak. Interacts with NSP5; this interaction leads to up-regulation of NSP5 phosphorylation and formation of viral factories. Interacts with host DCP1A, DCP1B, DDX6, EDC4 and EIF2S1/eIF2-alpha; these interactions are probably part of the sequestration of some host SGs and PBs proteins in viral factories.</text>
</comment>
<comment type="subcellular location">
    <subcellularLocation>
        <location evidence="1">Host cytoplasm</location>
    </subcellularLocation>
    <text evidence="1">Found in spherical cytoplasmic structures, called viral factories, that appear early after infection and are the site of viral replication and packaging.</text>
</comment>
<comment type="similarity">
    <text evidence="1">Belongs to the rotavirus NSP2 family.</text>
</comment>
<sequence>MAELACFCYPCDREGASVARYSRSAIKCMLSAKIDKSHSSQPYDTQVYGLAPPPVYKKRFNDGNNSRGMNFDTDMYDKVADLLVQILNGIKIGKDKAAEIMAVPISVRHLENLIYRIENKDDILSADPNLITKSVLIAMGLIKDCELTTTAEGGDIVFQNQGFTMWRLDYKSHVLMPITDPNFVEYKITLNHTNPIDDKIVKELVAELRWQYNKFAVITHGKGHYRVVRYSTVANHADRVYSTFKSIQKRNPSYKFNELDTRVIWTNWAAFVKSMLNGMKLDDSKRLLFTKMKPNESSFKGVTTERKLDEVSLLG</sequence>
<feature type="chain" id="PRO_0000149553" description="Non-structural protein 2">
    <location>
        <begin position="1"/>
        <end position="315"/>
    </location>
</feature>
<feature type="region of interest" description="RNA-binding" evidence="1">
    <location>
        <begin position="204"/>
        <end position="240"/>
    </location>
</feature>
<feature type="active site" description="For NTPase and RTPase activities" evidence="1">
    <location>
        <position position="224"/>
    </location>
</feature>
<feature type="binding site" evidence="1">
    <location>
        <begin position="106"/>
        <end position="108"/>
    </location>
    <ligand>
        <name>ATP</name>
        <dbReference type="ChEBI" id="CHEBI:30616"/>
    </ligand>
</feature>
<feature type="binding site" evidence="1">
    <location>
        <position position="187"/>
    </location>
    <ligand>
        <name>ATP</name>
        <dbReference type="ChEBI" id="CHEBI:30616"/>
    </ligand>
</feature>
<feature type="binding site" evidence="1">
    <location>
        <begin position="220"/>
        <end position="222"/>
    </location>
    <ligand>
        <name>ATP</name>
        <dbReference type="ChEBI" id="CHEBI:30616"/>
    </ligand>
</feature>
<feature type="binding site" evidence="1">
    <location>
        <position position="226"/>
    </location>
    <ligand>
        <name>ATP</name>
        <dbReference type="ChEBI" id="CHEBI:30616"/>
    </ligand>
</feature>
<protein>
    <recommendedName>
        <fullName evidence="1">Non-structural protein 2</fullName>
        <shortName evidence="1">NSP2</shortName>
        <ecNumber evidence="1">3.6.4.-</ecNumber>
    </recommendedName>
    <alternativeName>
        <fullName evidence="1">NCVP3</fullName>
    </alternativeName>
    <alternativeName>
        <fullName evidence="1">Non-structural RNA-binding protein 35</fullName>
        <shortName evidence="1">NS35</shortName>
    </alternativeName>
</protein>
<organism>
    <name type="scientific">Rotavirus A (strain RVA/Turkey/Ireland/Ty-1/1978/G7P[17])</name>
    <name type="common">RV-A</name>
    <dbReference type="NCBI Taxonomy" id="12584"/>
    <lineage>
        <taxon>Viruses</taxon>
        <taxon>Riboviria</taxon>
        <taxon>Orthornavirae</taxon>
        <taxon>Duplornaviricota</taxon>
        <taxon>Resentoviricetes</taxon>
        <taxon>Reovirales</taxon>
        <taxon>Sedoreoviridae</taxon>
        <taxon>Rotavirus</taxon>
        <taxon>Rotavirus A</taxon>
    </lineage>
</organism>
<keyword id="KW-0067">ATP-binding</keyword>
<keyword id="KW-1035">Host cytoplasm</keyword>
<keyword id="KW-0378">Hydrolase</keyword>
<keyword id="KW-0460">Magnesium</keyword>
<keyword id="KW-0479">Metal-binding</keyword>
<keyword id="KW-0547">Nucleotide-binding</keyword>
<keyword id="KW-0694">RNA-binding</keyword>
<accession>Q03244</accession>
<proteinExistence type="inferred from homology"/>